<dbReference type="GO" id="GO:0005576">
    <property type="term" value="C:extracellular region"/>
    <property type="evidence" value="ECO:0007669"/>
    <property type="project" value="UniProtKB-SubCell"/>
</dbReference>
<dbReference type="GO" id="GO:0035792">
    <property type="term" value="C:host cell postsynaptic membrane"/>
    <property type="evidence" value="ECO:0007669"/>
    <property type="project" value="UniProtKB-KW"/>
</dbReference>
<dbReference type="GO" id="GO:0030550">
    <property type="term" value="F:acetylcholine receptor inhibitor activity"/>
    <property type="evidence" value="ECO:0007669"/>
    <property type="project" value="UniProtKB-KW"/>
</dbReference>
<dbReference type="GO" id="GO:0090729">
    <property type="term" value="F:toxin activity"/>
    <property type="evidence" value="ECO:0007669"/>
    <property type="project" value="UniProtKB-KW"/>
</dbReference>
<sequence length="15" mass="1662">CCSALCSRYHCLPCC</sequence>
<name>CM3A_CONAC</name>
<keyword id="KW-0008">Acetylcholine receptor inhibiting toxin</keyword>
<keyword id="KW-0027">Amidation</keyword>
<keyword id="KW-0903">Direct protein sequencing</keyword>
<keyword id="KW-1015">Disulfide bond</keyword>
<keyword id="KW-0528">Neurotoxin</keyword>
<keyword id="KW-0629">Postsynaptic neurotoxin</keyword>
<keyword id="KW-0964">Secreted</keyword>
<keyword id="KW-0800">Toxin</keyword>
<reference key="1">
    <citation type="journal article" date="2022" name="Peptides">
        <title>A short framework-III (mini-M-2) conotoxin from the venom of a vermivorous species, Conus archon, inhibits human neuronal nicotinic acetylcholine receptors.</title>
        <authorList>
            <person name="Hernandez-Samano A.C."/>
            <person name="Falcon A."/>
            <person name="Zamudio F."/>
            <person name="Michel-Morfin J.E."/>
            <person name="Landa-Jaime V."/>
            <person name="Lopez-Vera E."/>
            <person name="Jeziorski M.C."/>
            <person name="Aguilar M.B."/>
        </authorList>
    </citation>
    <scope>PROTEIN SEQUENCE</scope>
    <scope>FUNCTION</scope>
    <scope>SUBCELLULAR LOCATION</scope>
    <scope>MASS SPECTROMETRY</scope>
    <scope>3D-STRUCTURE MODELING</scope>
    <source>
        <tissue>Venom</tissue>
    </source>
</reference>
<proteinExistence type="evidence at protein level"/>
<feature type="peptide" id="PRO_0000456334" description="Conotoxin ArchIIIA" evidence="2">
    <location>
        <begin position="1"/>
        <end position="15"/>
    </location>
</feature>
<feature type="disulfide bond" evidence="1">
    <location>
        <begin position="1"/>
        <end position="15"/>
    </location>
</feature>
<feature type="disulfide bond" evidence="1">
    <location>
        <begin position="2"/>
        <end position="11"/>
    </location>
</feature>
<feature type="disulfide bond" evidence="1">
    <location>
        <begin position="6"/>
        <end position="14"/>
    </location>
</feature>
<evidence type="ECO:0000250" key="1">
    <source>
        <dbReference type="UniProtKB" id="P85021"/>
    </source>
</evidence>
<evidence type="ECO:0000269" key="2">
    <source>
    </source>
</evidence>
<evidence type="ECO:0000303" key="3">
    <source>
    </source>
</evidence>
<evidence type="ECO:0000305" key="4"/>
<evidence type="ECO:0000305" key="5">
    <source>
    </source>
</evidence>
<comment type="function">
    <text evidence="2">Slowly and reversibly inhibits human nicotinic acetylcholine receptors (nAChR) alpha-7/CHRNA7 (IC(50)=45.7 uM). It is unknown whether it inhibits nAChRs by a competitive or a non-competitive mechanism.</text>
</comment>
<comment type="subcellular location">
    <subcellularLocation>
        <location evidence="2">Secreted</location>
    </subcellularLocation>
</comment>
<comment type="tissue specificity">
    <text evidence="5">Expressed by the venom duct.</text>
</comment>
<comment type="domain">
    <text evidence="4">The cysteine framework is III (CC-C-C-CC). Classified in the M-2 branch, since 2 residues stand between the fourth and the fifth cysteine residues.</text>
</comment>
<comment type="PTM">
    <text evidence="2">Has a free C-terminus.</text>
</comment>
<comment type="mass spectrometry" mass="1654.6" method="Electrospray" evidence="2">
    <text>Monoisotopic mass.</text>
</comment>
<comment type="miscellaneous">
    <text evidence="2">Has low or no effect on human alpha-3-beta-2/CHRNA3-CHRNB2 and alpha-7-beta-2/CHRNA7-CHRNB2 nAChR.</text>
</comment>
<comment type="similarity">
    <text evidence="4">Belongs to the conotoxin M superfamily.</text>
</comment>
<protein>
    <recommendedName>
        <fullName evidence="3">Conotoxin ArchIIIA</fullName>
    </recommendedName>
    <alternativeName>
        <fullName evidence="3">F27-1</fullName>
    </alternativeName>
</protein>
<accession>P0DQV5</accession>
<organism>
    <name type="scientific">Conus archon</name>
    <name type="common">Magistrate cone</name>
    <dbReference type="NCBI Taxonomy" id="257315"/>
    <lineage>
        <taxon>Eukaryota</taxon>
        <taxon>Metazoa</taxon>
        <taxon>Spiralia</taxon>
        <taxon>Lophotrochozoa</taxon>
        <taxon>Mollusca</taxon>
        <taxon>Gastropoda</taxon>
        <taxon>Caenogastropoda</taxon>
        <taxon>Neogastropoda</taxon>
        <taxon>Conoidea</taxon>
        <taxon>Conidae</taxon>
        <taxon>Conus</taxon>
        <taxon>Stephanoconus</taxon>
    </lineage>
</organism>